<name>RPOC_STRU0</name>
<dbReference type="EC" id="2.7.7.6" evidence="1"/>
<dbReference type="EMBL" id="AM946015">
    <property type="protein sequence ID" value="CAR40526.1"/>
    <property type="molecule type" value="Genomic_DNA"/>
</dbReference>
<dbReference type="RefSeq" id="WP_012657671.1">
    <property type="nucleotide sequence ID" value="NC_012004.1"/>
</dbReference>
<dbReference type="SMR" id="B9DSZ6"/>
<dbReference type="STRING" id="218495.SUB0116"/>
<dbReference type="KEGG" id="sub:SUB0116"/>
<dbReference type="eggNOG" id="COG0086">
    <property type="taxonomic scope" value="Bacteria"/>
</dbReference>
<dbReference type="HOGENOM" id="CLU_000524_3_1_9"/>
<dbReference type="OrthoDB" id="9815296at2"/>
<dbReference type="Proteomes" id="UP000000449">
    <property type="component" value="Chromosome"/>
</dbReference>
<dbReference type="GO" id="GO:0000428">
    <property type="term" value="C:DNA-directed RNA polymerase complex"/>
    <property type="evidence" value="ECO:0007669"/>
    <property type="project" value="UniProtKB-KW"/>
</dbReference>
<dbReference type="GO" id="GO:0003677">
    <property type="term" value="F:DNA binding"/>
    <property type="evidence" value="ECO:0007669"/>
    <property type="project" value="UniProtKB-UniRule"/>
</dbReference>
<dbReference type="GO" id="GO:0003899">
    <property type="term" value="F:DNA-directed RNA polymerase activity"/>
    <property type="evidence" value="ECO:0007669"/>
    <property type="project" value="UniProtKB-UniRule"/>
</dbReference>
<dbReference type="GO" id="GO:0000287">
    <property type="term" value="F:magnesium ion binding"/>
    <property type="evidence" value="ECO:0007669"/>
    <property type="project" value="UniProtKB-UniRule"/>
</dbReference>
<dbReference type="GO" id="GO:0008270">
    <property type="term" value="F:zinc ion binding"/>
    <property type="evidence" value="ECO:0007669"/>
    <property type="project" value="UniProtKB-UniRule"/>
</dbReference>
<dbReference type="GO" id="GO:0006351">
    <property type="term" value="P:DNA-templated transcription"/>
    <property type="evidence" value="ECO:0007669"/>
    <property type="project" value="UniProtKB-UniRule"/>
</dbReference>
<dbReference type="CDD" id="cd02655">
    <property type="entry name" value="RNAP_beta'_C"/>
    <property type="match status" value="1"/>
</dbReference>
<dbReference type="CDD" id="cd01609">
    <property type="entry name" value="RNAP_beta'_N"/>
    <property type="match status" value="1"/>
</dbReference>
<dbReference type="FunFam" id="1.10.150.390:FF:000002">
    <property type="entry name" value="DNA-directed RNA polymerase subunit beta"/>
    <property type="match status" value="1"/>
</dbReference>
<dbReference type="FunFam" id="4.10.860.120:FF:000001">
    <property type="entry name" value="DNA-directed RNA polymerase subunit beta"/>
    <property type="match status" value="1"/>
</dbReference>
<dbReference type="Gene3D" id="1.10.132.30">
    <property type="match status" value="1"/>
</dbReference>
<dbReference type="Gene3D" id="1.10.150.390">
    <property type="match status" value="1"/>
</dbReference>
<dbReference type="Gene3D" id="1.10.1790.20">
    <property type="match status" value="1"/>
</dbReference>
<dbReference type="Gene3D" id="1.10.40.90">
    <property type="match status" value="1"/>
</dbReference>
<dbReference type="Gene3D" id="2.40.40.20">
    <property type="match status" value="1"/>
</dbReference>
<dbReference type="Gene3D" id="2.40.50.100">
    <property type="match status" value="1"/>
</dbReference>
<dbReference type="Gene3D" id="4.10.860.120">
    <property type="entry name" value="RNA polymerase II, clamp domain"/>
    <property type="match status" value="1"/>
</dbReference>
<dbReference type="Gene3D" id="1.10.274.100">
    <property type="entry name" value="RNA polymerase Rpb1, domain 3"/>
    <property type="match status" value="1"/>
</dbReference>
<dbReference type="HAMAP" id="MF_01322">
    <property type="entry name" value="RNApol_bact_RpoC"/>
    <property type="match status" value="1"/>
</dbReference>
<dbReference type="InterPro" id="IPR045867">
    <property type="entry name" value="DNA-dir_RpoC_beta_prime"/>
</dbReference>
<dbReference type="InterPro" id="IPR012754">
    <property type="entry name" value="DNA-dir_RpoC_beta_prime_bact"/>
</dbReference>
<dbReference type="InterPro" id="IPR000722">
    <property type="entry name" value="RNA_pol_asu"/>
</dbReference>
<dbReference type="InterPro" id="IPR006592">
    <property type="entry name" value="RNA_pol_N"/>
</dbReference>
<dbReference type="InterPro" id="IPR007080">
    <property type="entry name" value="RNA_pol_Rpb1_1"/>
</dbReference>
<dbReference type="InterPro" id="IPR007066">
    <property type="entry name" value="RNA_pol_Rpb1_3"/>
</dbReference>
<dbReference type="InterPro" id="IPR042102">
    <property type="entry name" value="RNA_pol_Rpb1_3_sf"/>
</dbReference>
<dbReference type="InterPro" id="IPR007083">
    <property type="entry name" value="RNA_pol_Rpb1_4"/>
</dbReference>
<dbReference type="InterPro" id="IPR007081">
    <property type="entry name" value="RNA_pol_Rpb1_5"/>
</dbReference>
<dbReference type="InterPro" id="IPR044893">
    <property type="entry name" value="RNA_pol_Rpb1_clamp_domain"/>
</dbReference>
<dbReference type="InterPro" id="IPR038120">
    <property type="entry name" value="Rpb1_funnel_sf"/>
</dbReference>
<dbReference type="NCBIfam" id="TIGR02386">
    <property type="entry name" value="rpoC_TIGR"/>
    <property type="match status" value="1"/>
</dbReference>
<dbReference type="PANTHER" id="PTHR19376">
    <property type="entry name" value="DNA-DIRECTED RNA POLYMERASE"/>
    <property type="match status" value="1"/>
</dbReference>
<dbReference type="PANTHER" id="PTHR19376:SF54">
    <property type="entry name" value="DNA-DIRECTED RNA POLYMERASE SUBUNIT BETA"/>
    <property type="match status" value="1"/>
</dbReference>
<dbReference type="Pfam" id="PF04997">
    <property type="entry name" value="RNA_pol_Rpb1_1"/>
    <property type="match status" value="1"/>
</dbReference>
<dbReference type="Pfam" id="PF00623">
    <property type="entry name" value="RNA_pol_Rpb1_2"/>
    <property type="match status" value="2"/>
</dbReference>
<dbReference type="Pfam" id="PF04983">
    <property type="entry name" value="RNA_pol_Rpb1_3"/>
    <property type="match status" value="1"/>
</dbReference>
<dbReference type="Pfam" id="PF05000">
    <property type="entry name" value="RNA_pol_Rpb1_4"/>
    <property type="match status" value="1"/>
</dbReference>
<dbReference type="Pfam" id="PF04998">
    <property type="entry name" value="RNA_pol_Rpb1_5"/>
    <property type="match status" value="1"/>
</dbReference>
<dbReference type="SMART" id="SM00663">
    <property type="entry name" value="RPOLA_N"/>
    <property type="match status" value="1"/>
</dbReference>
<dbReference type="SUPFAM" id="SSF64484">
    <property type="entry name" value="beta and beta-prime subunits of DNA dependent RNA-polymerase"/>
    <property type="match status" value="1"/>
</dbReference>
<evidence type="ECO:0000255" key="1">
    <source>
        <dbReference type="HAMAP-Rule" id="MF_01322"/>
    </source>
</evidence>
<gene>
    <name evidence="1" type="primary">rpoC</name>
    <name type="ordered locus">SUB0116</name>
</gene>
<protein>
    <recommendedName>
        <fullName evidence="1">DNA-directed RNA polymerase subunit beta'</fullName>
        <shortName evidence="1">RNAP subunit beta'</shortName>
        <ecNumber evidence="1">2.7.7.6</ecNumber>
    </recommendedName>
    <alternativeName>
        <fullName evidence="1">RNA polymerase subunit beta'</fullName>
    </alternativeName>
    <alternativeName>
        <fullName evidence="1">Transcriptase subunit beta'</fullName>
    </alternativeName>
</protein>
<accession>B9DSZ6</accession>
<comment type="function">
    <text evidence="1">DNA-dependent RNA polymerase catalyzes the transcription of DNA into RNA using the four ribonucleoside triphosphates as substrates.</text>
</comment>
<comment type="catalytic activity">
    <reaction evidence="1">
        <text>RNA(n) + a ribonucleoside 5'-triphosphate = RNA(n+1) + diphosphate</text>
        <dbReference type="Rhea" id="RHEA:21248"/>
        <dbReference type="Rhea" id="RHEA-COMP:14527"/>
        <dbReference type="Rhea" id="RHEA-COMP:17342"/>
        <dbReference type="ChEBI" id="CHEBI:33019"/>
        <dbReference type="ChEBI" id="CHEBI:61557"/>
        <dbReference type="ChEBI" id="CHEBI:140395"/>
        <dbReference type="EC" id="2.7.7.6"/>
    </reaction>
</comment>
<comment type="cofactor">
    <cofactor evidence="1">
        <name>Mg(2+)</name>
        <dbReference type="ChEBI" id="CHEBI:18420"/>
    </cofactor>
    <text evidence="1">Binds 1 Mg(2+) ion per subunit.</text>
</comment>
<comment type="cofactor">
    <cofactor evidence="1">
        <name>Zn(2+)</name>
        <dbReference type="ChEBI" id="CHEBI:29105"/>
    </cofactor>
    <text evidence="1">Binds 2 Zn(2+) ions per subunit.</text>
</comment>
<comment type="subunit">
    <text evidence="1">The RNAP catalytic core consists of 2 alpha, 1 beta, 1 beta' and 1 omega subunit. When a sigma factor is associated with the core the holoenzyme is formed, which can initiate transcription.</text>
</comment>
<comment type="similarity">
    <text evidence="1">Belongs to the RNA polymerase beta' chain family.</text>
</comment>
<keyword id="KW-0240">DNA-directed RNA polymerase</keyword>
<keyword id="KW-0460">Magnesium</keyword>
<keyword id="KW-0479">Metal-binding</keyword>
<keyword id="KW-0548">Nucleotidyltransferase</keyword>
<keyword id="KW-1185">Reference proteome</keyword>
<keyword id="KW-0804">Transcription</keyword>
<keyword id="KW-0808">Transferase</keyword>
<keyword id="KW-0862">Zinc</keyword>
<organism>
    <name type="scientific">Streptococcus uberis (strain ATCC BAA-854 / 0140J)</name>
    <dbReference type="NCBI Taxonomy" id="218495"/>
    <lineage>
        <taxon>Bacteria</taxon>
        <taxon>Bacillati</taxon>
        <taxon>Bacillota</taxon>
        <taxon>Bacilli</taxon>
        <taxon>Lactobacillales</taxon>
        <taxon>Streptococcaceae</taxon>
        <taxon>Streptococcus</taxon>
    </lineage>
</organism>
<reference key="1">
    <citation type="journal article" date="2009" name="BMC Genomics">
        <title>Evidence for niche adaptation in the genome of the bovine pathogen Streptococcus uberis.</title>
        <authorList>
            <person name="Ward P.N."/>
            <person name="Holden M.T.G."/>
            <person name="Leigh J.A."/>
            <person name="Lennard N."/>
            <person name="Bignell A."/>
            <person name="Barron A."/>
            <person name="Clark L."/>
            <person name="Quail M.A."/>
            <person name="Woodward J."/>
            <person name="Barrell B.G."/>
            <person name="Egan S.A."/>
            <person name="Field T.R."/>
            <person name="Maskell D."/>
            <person name="Kehoe M."/>
            <person name="Dowson C.G."/>
            <person name="Chanter N."/>
            <person name="Whatmore A.M."/>
            <person name="Bentley S.D."/>
            <person name="Parkhill J."/>
        </authorList>
    </citation>
    <scope>NUCLEOTIDE SEQUENCE [LARGE SCALE GENOMIC DNA]</scope>
    <source>
        <strain>ATCC BAA-854 / 0140J</strain>
    </source>
</reference>
<proteinExistence type="inferred from homology"/>
<feature type="chain" id="PRO_1000165852" description="DNA-directed RNA polymerase subunit beta'">
    <location>
        <begin position="1"/>
        <end position="1212"/>
    </location>
</feature>
<feature type="binding site" evidence="1">
    <location>
        <position position="60"/>
    </location>
    <ligand>
        <name>Zn(2+)</name>
        <dbReference type="ChEBI" id="CHEBI:29105"/>
        <label>1</label>
    </ligand>
</feature>
<feature type="binding site" evidence="1">
    <location>
        <position position="62"/>
    </location>
    <ligand>
        <name>Zn(2+)</name>
        <dbReference type="ChEBI" id="CHEBI:29105"/>
        <label>1</label>
    </ligand>
</feature>
<feature type="binding site" evidence="1">
    <location>
        <position position="75"/>
    </location>
    <ligand>
        <name>Zn(2+)</name>
        <dbReference type="ChEBI" id="CHEBI:29105"/>
        <label>1</label>
    </ligand>
</feature>
<feature type="binding site" evidence="1">
    <location>
        <position position="78"/>
    </location>
    <ligand>
        <name>Zn(2+)</name>
        <dbReference type="ChEBI" id="CHEBI:29105"/>
        <label>1</label>
    </ligand>
</feature>
<feature type="binding site" evidence="1">
    <location>
        <position position="450"/>
    </location>
    <ligand>
        <name>Mg(2+)</name>
        <dbReference type="ChEBI" id="CHEBI:18420"/>
    </ligand>
</feature>
<feature type="binding site" evidence="1">
    <location>
        <position position="452"/>
    </location>
    <ligand>
        <name>Mg(2+)</name>
        <dbReference type="ChEBI" id="CHEBI:18420"/>
    </ligand>
</feature>
<feature type="binding site" evidence="1">
    <location>
        <position position="454"/>
    </location>
    <ligand>
        <name>Mg(2+)</name>
        <dbReference type="ChEBI" id="CHEBI:18420"/>
    </ligand>
</feature>
<feature type="binding site" evidence="1">
    <location>
        <position position="819"/>
    </location>
    <ligand>
        <name>Zn(2+)</name>
        <dbReference type="ChEBI" id="CHEBI:29105"/>
        <label>2</label>
    </ligand>
</feature>
<feature type="binding site" evidence="1">
    <location>
        <position position="893"/>
    </location>
    <ligand>
        <name>Zn(2+)</name>
        <dbReference type="ChEBI" id="CHEBI:29105"/>
        <label>2</label>
    </ligand>
</feature>
<feature type="binding site" evidence="1">
    <location>
        <position position="900"/>
    </location>
    <ligand>
        <name>Zn(2+)</name>
        <dbReference type="ChEBI" id="CHEBI:29105"/>
        <label>2</label>
    </ligand>
</feature>
<feature type="binding site" evidence="1">
    <location>
        <position position="903"/>
    </location>
    <ligand>
        <name>Zn(2+)</name>
        <dbReference type="ChEBI" id="CHEBI:29105"/>
        <label>2</label>
    </ligand>
</feature>
<sequence>MVDVNRFKSMQITLASPSKVRSWSYGEVKKPETINYRTLKPEREGLFDEVIFGPTKDWECACGKYKRIRYKGIVCDRCGVEVTRAKVRRERMGHIELKAPVSHIWYFKGIPSRMGLTLDMSPRALEEVIYFAAYVVIDPMDTPLEPKSLLTEREYREKVQEYGYGSFIAKMGAEAIQDLLKRVDLPAEIAELKEELKTATGQKRIKAVRRLDVLDAFNKSGNKPEWMVLNILPVIPPDLRPMVQLDGGRFAASDLNDLYRRVINRNNRLARLLELNAPGIIVQNEKRMLQEAVDALIDNGRRGRPITGPGSRPLKSLSHMLKGKQGRFRQNLLGKRVDFSGRSVIAVGPTLKMYQCGVPREMAIELFKPFVMREIVAKEYAGNVKAAKRMVERGDERIWDILEEVIKEHPVLLNRAPTLHRLGIQAFEPVLIDGKALRLHPLVCEAYNADFDGDQMAIHVPLSEEAQAEARLLMLAAEHILNPKDGKPVVTPSQDMVLGNYYLTMEDAGREGEGMIFKDIDEAVMAYQNGYAHLHSRVGIAVDSMPNKPWKDSQRHKIMVTTVGKILFNAIMPEDLPYLQEPNNANLTEGTPDKYFLEAGQDIQEVIDNLPINVPFKKKNLGNIIAETFKRFRTTETSAFLDRLKDLGYYHSTLAGLTVGIADIPVIDNKAEIIEAAHHRVEDINKAFRRGLMTEDDRYIAVTTTWREAKEALEKRLIETQDPKNPIVMMMDSGARGNISNFSQLAGMRGLMAAPNGRIMELPILSNFREGLSVLEMFFSTHGARKGMTDTALKTADSGYLTRRLVDVAQDVIIREDDCGTDRGLVIRAITDGKEVTETLEERLQGRYTRKSVKHPETGEVLIGADQLISEDMARKIVEAGVEEVTIRSVFTCATRHGVCRHCYGINLATGDAVEVGEAVGTIAAQSIGEPGTQLTMRTFHTGGVASNTDITQGLPRIQEIFEARNPKGEAVITEVKGKVVDIEEDASTRTKKVYVEGKTGNGEYVVPFTARMKVEIGDEVNRGAALTEGSIQPKRLLEVRDTLSVETYLLAEVQKVYRSQGVEIGDKHVEVMVRQMLRKVRVMDPGDTDLLPGTLMDISDFTDANKEIVISGGIPATSRPVLMGITKASLETNSFLSAASFQETTRVLTDAAIRGKKDHLLGLKENVIIGKIIPAGTGMARYRNIEPQAINEVEIIEETEQAEETVVTEAE</sequence>